<name>DXR_WOLTR</name>
<sequence>MKKISVLGSTGSIGKKTVDLLLKRKEEYQVEALSTCSNFALLACQAKLLNARYVAISNKRFYKDLKESLLGTGIKVEVGTEGLMNVASLPVDLSVVAVVGIAGLEPVMHVIESGTKVIALANKESIVCGGKLLLKKTEEKNVQIVPIDSEHNAIFQVLQNGNKCVEKIILTASGGSFLNYSLEQLRNVTVGQALSHPTWNMGKKISVDSATMMNKALEIIEAHNLFNISPNRIEAIVHPESIIHGIVIYKDGFNFAVLAEADMAIPISYALSWPERSALSYKLDLTKQKLTFQEPDHKRFPALKLSMEVLNSSSPHTNSIVLNAANEVAVDKFLKSRIDFLEIIKVVKLTVENFDSYTDINSLSDIINIDLESRAIAKEIIKNKVLAYS</sequence>
<keyword id="KW-0414">Isoprene biosynthesis</keyword>
<keyword id="KW-0464">Manganese</keyword>
<keyword id="KW-0479">Metal-binding</keyword>
<keyword id="KW-0521">NADP</keyword>
<keyword id="KW-0560">Oxidoreductase</keyword>
<keyword id="KW-1185">Reference proteome</keyword>
<comment type="function">
    <text evidence="1">Catalyzes the NADPH-dependent rearrangement and reduction of 1-deoxy-D-xylulose-5-phosphate (DXP) to 2-C-methyl-D-erythritol 4-phosphate (MEP).</text>
</comment>
<comment type="catalytic activity">
    <reaction evidence="1">
        <text>2-C-methyl-D-erythritol 4-phosphate + NADP(+) = 1-deoxy-D-xylulose 5-phosphate + NADPH + H(+)</text>
        <dbReference type="Rhea" id="RHEA:13717"/>
        <dbReference type="ChEBI" id="CHEBI:15378"/>
        <dbReference type="ChEBI" id="CHEBI:57783"/>
        <dbReference type="ChEBI" id="CHEBI:57792"/>
        <dbReference type="ChEBI" id="CHEBI:58262"/>
        <dbReference type="ChEBI" id="CHEBI:58349"/>
        <dbReference type="EC" id="1.1.1.267"/>
    </reaction>
    <physiologicalReaction direction="right-to-left" evidence="1">
        <dbReference type="Rhea" id="RHEA:13719"/>
    </physiologicalReaction>
</comment>
<comment type="cofactor">
    <cofactor evidence="1">
        <name>Mg(2+)</name>
        <dbReference type="ChEBI" id="CHEBI:18420"/>
    </cofactor>
    <cofactor evidence="1">
        <name>Mn(2+)</name>
        <dbReference type="ChEBI" id="CHEBI:29035"/>
    </cofactor>
</comment>
<comment type="pathway">
    <text evidence="1">Isoprenoid biosynthesis; isopentenyl diphosphate biosynthesis via DXP pathway; isopentenyl diphosphate from 1-deoxy-D-xylulose 5-phosphate: step 1/6.</text>
</comment>
<comment type="similarity">
    <text evidence="1">Belongs to the DXR family.</text>
</comment>
<proteinExistence type="inferred from homology"/>
<reference key="1">
    <citation type="journal article" date="2005" name="PLoS Biol.">
        <title>The Wolbachia genome of Brugia malayi: endosymbiont evolution within a human pathogenic nematode.</title>
        <authorList>
            <person name="Foster J."/>
            <person name="Ganatra M."/>
            <person name="Kamal I."/>
            <person name="Ware J."/>
            <person name="Makarova K."/>
            <person name="Ivanova N."/>
            <person name="Bhattacharyya A."/>
            <person name="Kapatral V."/>
            <person name="Kumar S."/>
            <person name="Posfai J."/>
            <person name="Vincze T."/>
            <person name="Ingram J."/>
            <person name="Moran L."/>
            <person name="Lapidus A."/>
            <person name="Omelchenko M."/>
            <person name="Kyrpides N."/>
            <person name="Ghedin E."/>
            <person name="Wang S."/>
            <person name="Goltsman E."/>
            <person name="Joukov V."/>
            <person name="Ostrovskaya O."/>
            <person name="Tsukerman K."/>
            <person name="Mazur M."/>
            <person name="Comb D."/>
            <person name="Koonin E."/>
            <person name="Slatko B."/>
        </authorList>
    </citation>
    <scope>NUCLEOTIDE SEQUENCE [LARGE SCALE GENOMIC DNA]</scope>
    <source>
        <strain>TRS</strain>
    </source>
</reference>
<protein>
    <recommendedName>
        <fullName evidence="1">1-deoxy-D-xylulose 5-phosphate reductoisomerase</fullName>
        <shortName evidence="1">DXP reductoisomerase</shortName>
        <ecNumber evidence="1">1.1.1.267</ecNumber>
    </recommendedName>
    <alternativeName>
        <fullName evidence="1">1-deoxyxylulose-5-phosphate reductoisomerase</fullName>
    </alternativeName>
    <alternativeName>
        <fullName evidence="1">2-C-methyl-D-erythritol 4-phosphate synthase</fullName>
    </alternativeName>
</protein>
<accession>Q5GTA4</accession>
<feature type="chain" id="PRO_0000163737" description="1-deoxy-D-xylulose 5-phosphate reductoisomerase">
    <location>
        <begin position="1"/>
        <end position="389"/>
    </location>
</feature>
<feature type="binding site" evidence="1">
    <location>
        <position position="10"/>
    </location>
    <ligand>
        <name>NADPH</name>
        <dbReference type="ChEBI" id="CHEBI:57783"/>
    </ligand>
</feature>
<feature type="binding site" evidence="1">
    <location>
        <position position="11"/>
    </location>
    <ligand>
        <name>NADPH</name>
        <dbReference type="ChEBI" id="CHEBI:57783"/>
    </ligand>
</feature>
<feature type="binding site" evidence="1">
    <location>
        <position position="12"/>
    </location>
    <ligand>
        <name>NADPH</name>
        <dbReference type="ChEBI" id="CHEBI:57783"/>
    </ligand>
</feature>
<feature type="binding site" evidence="1">
    <location>
        <position position="13"/>
    </location>
    <ligand>
        <name>NADPH</name>
        <dbReference type="ChEBI" id="CHEBI:57783"/>
    </ligand>
</feature>
<feature type="binding site" evidence="1">
    <location>
        <position position="38"/>
    </location>
    <ligand>
        <name>NADPH</name>
        <dbReference type="ChEBI" id="CHEBI:57783"/>
    </ligand>
</feature>
<feature type="binding site" evidence="1">
    <location>
        <position position="122"/>
    </location>
    <ligand>
        <name>NADPH</name>
        <dbReference type="ChEBI" id="CHEBI:57783"/>
    </ligand>
</feature>
<feature type="binding site" evidence="1">
    <location>
        <position position="123"/>
    </location>
    <ligand>
        <name>1-deoxy-D-xylulose 5-phosphate</name>
        <dbReference type="ChEBI" id="CHEBI:57792"/>
    </ligand>
</feature>
<feature type="binding site" evidence="1">
    <location>
        <position position="124"/>
    </location>
    <ligand>
        <name>NADPH</name>
        <dbReference type="ChEBI" id="CHEBI:57783"/>
    </ligand>
</feature>
<feature type="binding site" evidence="1">
    <location>
        <position position="148"/>
    </location>
    <ligand>
        <name>Mn(2+)</name>
        <dbReference type="ChEBI" id="CHEBI:29035"/>
    </ligand>
</feature>
<feature type="binding site" evidence="1">
    <location>
        <position position="149"/>
    </location>
    <ligand>
        <name>1-deoxy-D-xylulose 5-phosphate</name>
        <dbReference type="ChEBI" id="CHEBI:57792"/>
    </ligand>
</feature>
<feature type="binding site" evidence="1">
    <location>
        <position position="150"/>
    </location>
    <ligand>
        <name>1-deoxy-D-xylulose 5-phosphate</name>
        <dbReference type="ChEBI" id="CHEBI:57792"/>
    </ligand>
</feature>
<feature type="binding site" evidence="1">
    <location>
        <position position="150"/>
    </location>
    <ligand>
        <name>Mn(2+)</name>
        <dbReference type="ChEBI" id="CHEBI:29035"/>
    </ligand>
</feature>
<feature type="binding site" evidence="1">
    <location>
        <position position="173"/>
    </location>
    <ligand>
        <name>1-deoxy-D-xylulose 5-phosphate</name>
        <dbReference type="ChEBI" id="CHEBI:57792"/>
    </ligand>
</feature>
<feature type="binding site" evidence="1">
    <location>
        <position position="196"/>
    </location>
    <ligand>
        <name>1-deoxy-D-xylulose 5-phosphate</name>
        <dbReference type="ChEBI" id="CHEBI:57792"/>
    </ligand>
</feature>
<feature type="binding site" evidence="1">
    <location>
        <position position="202"/>
    </location>
    <ligand>
        <name>NADPH</name>
        <dbReference type="ChEBI" id="CHEBI:57783"/>
    </ligand>
</feature>
<feature type="binding site" evidence="1">
    <location>
        <position position="209"/>
    </location>
    <ligand>
        <name>1-deoxy-D-xylulose 5-phosphate</name>
        <dbReference type="ChEBI" id="CHEBI:57792"/>
    </ligand>
</feature>
<feature type="binding site" evidence="1">
    <location>
        <position position="214"/>
    </location>
    <ligand>
        <name>1-deoxy-D-xylulose 5-phosphate</name>
        <dbReference type="ChEBI" id="CHEBI:57792"/>
    </ligand>
</feature>
<feature type="binding site" evidence="1">
    <location>
        <position position="215"/>
    </location>
    <ligand>
        <name>1-deoxy-D-xylulose 5-phosphate</name>
        <dbReference type="ChEBI" id="CHEBI:57792"/>
    </ligand>
</feature>
<feature type="binding site" evidence="1">
    <location>
        <position position="218"/>
    </location>
    <ligand>
        <name>1-deoxy-D-xylulose 5-phosphate</name>
        <dbReference type="ChEBI" id="CHEBI:57792"/>
    </ligand>
</feature>
<feature type="binding site" evidence="1">
    <location>
        <position position="218"/>
    </location>
    <ligand>
        <name>Mn(2+)</name>
        <dbReference type="ChEBI" id="CHEBI:29035"/>
    </ligand>
</feature>
<dbReference type="EC" id="1.1.1.267" evidence="1"/>
<dbReference type="EMBL" id="AE017321">
    <property type="protein sequence ID" value="AAW70770.1"/>
    <property type="molecule type" value="Genomic_DNA"/>
</dbReference>
<dbReference type="RefSeq" id="WP_011256380.1">
    <property type="nucleotide sequence ID" value="NC_006833.1"/>
</dbReference>
<dbReference type="SMR" id="Q5GTA4"/>
<dbReference type="STRING" id="292805.Wbm0179"/>
<dbReference type="KEGG" id="wbm:Wbm0179"/>
<dbReference type="eggNOG" id="COG0743">
    <property type="taxonomic scope" value="Bacteria"/>
</dbReference>
<dbReference type="HOGENOM" id="CLU_035714_4_0_5"/>
<dbReference type="UniPathway" id="UPA00056">
    <property type="reaction ID" value="UER00092"/>
</dbReference>
<dbReference type="Proteomes" id="UP000000534">
    <property type="component" value="Chromosome"/>
</dbReference>
<dbReference type="GO" id="GO:0030604">
    <property type="term" value="F:1-deoxy-D-xylulose-5-phosphate reductoisomerase activity"/>
    <property type="evidence" value="ECO:0007669"/>
    <property type="project" value="UniProtKB-UniRule"/>
</dbReference>
<dbReference type="GO" id="GO:0030145">
    <property type="term" value="F:manganese ion binding"/>
    <property type="evidence" value="ECO:0007669"/>
    <property type="project" value="TreeGrafter"/>
</dbReference>
<dbReference type="GO" id="GO:0070402">
    <property type="term" value="F:NADPH binding"/>
    <property type="evidence" value="ECO:0007669"/>
    <property type="project" value="InterPro"/>
</dbReference>
<dbReference type="GO" id="GO:0051484">
    <property type="term" value="P:isopentenyl diphosphate biosynthetic process, methylerythritol 4-phosphate pathway involved in terpenoid biosynthetic process"/>
    <property type="evidence" value="ECO:0007669"/>
    <property type="project" value="TreeGrafter"/>
</dbReference>
<dbReference type="FunFam" id="3.40.50.720:FF:000045">
    <property type="entry name" value="1-deoxy-D-xylulose 5-phosphate reductoisomerase"/>
    <property type="match status" value="1"/>
</dbReference>
<dbReference type="Gene3D" id="1.10.1740.10">
    <property type="match status" value="1"/>
</dbReference>
<dbReference type="Gene3D" id="3.40.50.720">
    <property type="entry name" value="NAD(P)-binding Rossmann-like Domain"/>
    <property type="match status" value="1"/>
</dbReference>
<dbReference type="HAMAP" id="MF_00183">
    <property type="entry name" value="DXP_reductoisom"/>
    <property type="match status" value="1"/>
</dbReference>
<dbReference type="InterPro" id="IPR003821">
    <property type="entry name" value="DXP_reductoisomerase"/>
</dbReference>
<dbReference type="InterPro" id="IPR013644">
    <property type="entry name" value="DXP_reductoisomerase_C"/>
</dbReference>
<dbReference type="InterPro" id="IPR013512">
    <property type="entry name" value="DXP_reductoisomerase_N"/>
</dbReference>
<dbReference type="InterPro" id="IPR026877">
    <property type="entry name" value="DXPR_C"/>
</dbReference>
<dbReference type="InterPro" id="IPR036169">
    <property type="entry name" value="DXPR_C_sf"/>
</dbReference>
<dbReference type="InterPro" id="IPR036291">
    <property type="entry name" value="NAD(P)-bd_dom_sf"/>
</dbReference>
<dbReference type="NCBIfam" id="TIGR00243">
    <property type="entry name" value="Dxr"/>
    <property type="match status" value="1"/>
</dbReference>
<dbReference type="PANTHER" id="PTHR30525">
    <property type="entry name" value="1-DEOXY-D-XYLULOSE 5-PHOSPHATE REDUCTOISOMERASE"/>
    <property type="match status" value="1"/>
</dbReference>
<dbReference type="PANTHER" id="PTHR30525:SF0">
    <property type="entry name" value="1-DEOXY-D-XYLULOSE 5-PHOSPHATE REDUCTOISOMERASE, CHLOROPLASTIC"/>
    <property type="match status" value="1"/>
</dbReference>
<dbReference type="Pfam" id="PF08436">
    <property type="entry name" value="DXP_redisom_C"/>
    <property type="match status" value="1"/>
</dbReference>
<dbReference type="Pfam" id="PF02670">
    <property type="entry name" value="DXP_reductoisom"/>
    <property type="match status" value="1"/>
</dbReference>
<dbReference type="Pfam" id="PF13288">
    <property type="entry name" value="DXPR_C"/>
    <property type="match status" value="1"/>
</dbReference>
<dbReference type="PIRSF" id="PIRSF006205">
    <property type="entry name" value="Dxp_reductismrs"/>
    <property type="match status" value="1"/>
</dbReference>
<dbReference type="SUPFAM" id="SSF69055">
    <property type="entry name" value="1-deoxy-D-xylulose-5-phosphate reductoisomerase, C-terminal domain"/>
    <property type="match status" value="1"/>
</dbReference>
<dbReference type="SUPFAM" id="SSF55347">
    <property type="entry name" value="Glyceraldehyde-3-phosphate dehydrogenase-like, C-terminal domain"/>
    <property type="match status" value="1"/>
</dbReference>
<dbReference type="SUPFAM" id="SSF51735">
    <property type="entry name" value="NAD(P)-binding Rossmann-fold domains"/>
    <property type="match status" value="1"/>
</dbReference>
<evidence type="ECO:0000255" key="1">
    <source>
        <dbReference type="HAMAP-Rule" id="MF_00183"/>
    </source>
</evidence>
<gene>
    <name evidence="1" type="primary">dxr</name>
    <name type="ordered locus">Wbm0179</name>
</gene>
<organism>
    <name type="scientific">Wolbachia sp. subsp. Brugia malayi (strain TRS)</name>
    <dbReference type="NCBI Taxonomy" id="292805"/>
    <lineage>
        <taxon>Bacteria</taxon>
        <taxon>Pseudomonadati</taxon>
        <taxon>Pseudomonadota</taxon>
        <taxon>Alphaproteobacteria</taxon>
        <taxon>Rickettsiales</taxon>
        <taxon>Anaplasmataceae</taxon>
        <taxon>Wolbachieae</taxon>
        <taxon>Wolbachia</taxon>
    </lineage>
</organism>